<gene>
    <name type="primary">clpB</name>
</gene>
<reference key="1">
    <citation type="journal article" date="1990" name="Proc. Natl. Acad. Sci. U.S.A.">
        <title>Conservation of the regulatory subunit for the Clp ATP-dependent protease in prokaryotes and eukaryotes.</title>
        <authorList>
            <person name="Gottesman S."/>
            <person name="Squires C."/>
            <person name="Pichersky E."/>
            <person name="Carrington M."/>
            <person name="Hobbs M."/>
            <person name="Mattick J.S."/>
            <person name="Dalrymple B."/>
            <person name="Kuramitsu H."/>
            <person name="Shiroza T."/>
            <person name="Foster T."/>
            <person name="Clark W.P."/>
            <person name="Ross B."/>
            <person name="Squires C.L."/>
            <person name="Maurizi M.R."/>
        </authorList>
    </citation>
    <scope>NUCLEOTIDE SEQUENCE [GENOMIC DNA]</scope>
</reference>
<reference key="2">
    <citation type="journal article" date="1991" name="Mol. Microbiol.">
        <title>Gene sequences and comparison of the fimbrial subunits representative of Bacteroides nodosus serotypes A to I: class I and class II strains.</title>
        <authorList>
            <person name="Mattick J.S."/>
            <person name="Anderson B.J."/>
            <person name="Cox P.T."/>
            <person name="Dalrymple B.P."/>
            <person name="Bills M.M."/>
            <person name="Hobbs M."/>
            <person name="Egerton J.R."/>
        </authorList>
    </citation>
    <scope>NUCLEOTIDE SEQUENCE [GENOMIC DNA] OF 4-734</scope>
</reference>
<reference key="3">
    <citation type="journal article" date="1991" name="Mol. Microbiol.">
        <title>Organization of the fimbrial gene region of Bacteroides nodosus: class I and class II strains.</title>
        <authorList>
            <person name="Hobbs M."/>
            <person name="Dalrymple B.P."/>
            <person name="Cox P.T."/>
            <person name="Livingstone S.P."/>
            <person name="Delaney S.F."/>
            <person name="Mattick J.S."/>
        </authorList>
    </citation>
    <scope>NUCLEOTIDE SEQUENCE [GENOMIC DNA] OF 571-860</scope>
</reference>
<dbReference type="EMBL" id="M32230">
    <property type="protein sequence ID" value="AAA23344.1"/>
    <property type="molecule type" value="Genomic_DNA"/>
</dbReference>
<dbReference type="EMBL" id="M32229">
    <property type="protein sequence ID" value="AAA23341.1"/>
    <property type="molecule type" value="Genomic_DNA"/>
</dbReference>
<dbReference type="EMBL" id="X52390">
    <property type="protein sequence ID" value="CAA36623.1"/>
    <property type="molecule type" value="Genomic_DNA"/>
</dbReference>
<dbReference type="EMBL" id="X52410">
    <property type="protein sequence ID" value="CAA36664.1"/>
    <property type="molecule type" value="Genomic_DNA"/>
</dbReference>
<dbReference type="PIR" id="C35905">
    <property type="entry name" value="C35905"/>
</dbReference>
<dbReference type="SMR" id="P17422"/>
<dbReference type="GO" id="GO:0005737">
    <property type="term" value="C:cytoplasm"/>
    <property type="evidence" value="ECO:0007669"/>
    <property type="project" value="UniProtKB-SubCell"/>
</dbReference>
<dbReference type="GO" id="GO:0005524">
    <property type="term" value="F:ATP binding"/>
    <property type="evidence" value="ECO:0007669"/>
    <property type="project" value="UniProtKB-KW"/>
</dbReference>
<dbReference type="GO" id="GO:0016887">
    <property type="term" value="F:ATP hydrolysis activity"/>
    <property type="evidence" value="ECO:0007669"/>
    <property type="project" value="InterPro"/>
</dbReference>
<dbReference type="GO" id="GO:0034605">
    <property type="term" value="P:cellular response to heat"/>
    <property type="evidence" value="ECO:0007669"/>
    <property type="project" value="TreeGrafter"/>
</dbReference>
<dbReference type="GO" id="GO:0042026">
    <property type="term" value="P:protein refolding"/>
    <property type="evidence" value="ECO:0007669"/>
    <property type="project" value="InterPro"/>
</dbReference>
<dbReference type="CDD" id="cd00009">
    <property type="entry name" value="AAA"/>
    <property type="match status" value="1"/>
</dbReference>
<dbReference type="CDD" id="cd19499">
    <property type="entry name" value="RecA-like_ClpB_Hsp104-like"/>
    <property type="match status" value="1"/>
</dbReference>
<dbReference type="FunFam" id="3.40.50.300:FF:000120">
    <property type="entry name" value="ATP-dependent chaperone ClpB"/>
    <property type="match status" value="1"/>
</dbReference>
<dbReference type="FunFam" id="3.40.50.300:FF:000025">
    <property type="entry name" value="ATP-dependent Clp protease subunit"/>
    <property type="match status" value="1"/>
</dbReference>
<dbReference type="FunFam" id="3.40.50.300:FF:000010">
    <property type="entry name" value="Chaperone clpB 1, putative"/>
    <property type="match status" value="1"/>
</dbReference>
<dbReference type="Gene3D" id="1.10.8.60">
    <property type="match status" value="1"/>
</dbReference>
<dbReference type="Gene3D" id="1.10.1780.10">
    <property type="entry name" value="Clp, N-terminal domain"/>
    <property type="match status" value="1"/>
</dbReference>
<dbReference type="Gene3D" id="3.40.50.300">
    <property type="entry name" value="P-loop containing nucleotide triphosphate hydrolases"/>
    <property type="match status" value="3"/>
</dbReference>
<dbReference type="InterPro" id="IPR003593">
    <property type="entry name" value="AAA+_ATPase"/>
</dbReference>
<dbReference type="InterPro" id="IPR003959">
    <property type="entry name" value="ATPase_AAA_core"/>
</dbReference>
<dbReference type="InterPro" id="IPR017730">
    <property type="entry name" value="Chaperonin_ClpB"/>
</dbReference>
<dbReference type="InterPro" id="IPR019489">
    <property type="entry name" value="Clp_ATPase_C"/>
</dbReference>
<dbReference type="InterPro" id="IPR036628">
    <property type="entry name" value="Clp_N_dom_sf"/>
</dbReference>
<dbReference type="InterPro" id="IPR004176">
    <property type="entry name" value="Clp_R_dom"/>
</dbReference>
<dbReference type="InterPro" id="IPR001270">
    <property type="entry name" value="ClpA/B"/>
</dbReference>
<dbReference type="InterPro" id="IPR018368">
    <property type="entry name" value="ClpA/B_CS1"/>
</dbReference>
<dbReference type="InterPro" id="IPR028299">
    <property type="entry name" value="ClpA/B_CS2"/>
</dbReference>
<dbReference type="InterPro" id="IPR041546">
    <property type="entry name" value="ClpA/ClpB_AAA_lid"/>
</dbReference>
<dbReference type="InterPro" id="IPR050130">
    <property type="entry name" value="ClpA_ClpB"/>
</dbReference>
<dbReference type="InterPro" id="IPR027417">
    <property type="entry name" value="P-loop_NTPase"/>
</dbReference>
<dbReference type="NCBIfam" id="TIGR03346">
    <property type="entry name" value="chaperone_ClpB"/>
    <property type="match status" value="1"/>
</dbReference>
<dbReference type="PANTHER" id="PTHR11638">
    <property type="entry name" value="ATP-DEPENDENT CLP PROTEASE"/>
    <property type="match status" value="1"/>
</dbReference>
<dbReference type="PANTHER" id="PTHR11638:SF18">
    <property type="entry name" value="HEAT SHOCK PROTEIN 104"/>
    <property type="match status" value="1"/>
</dbReference>
<dbReference type="Pfam" id="PF00004">
    <property type="entry name" value="AAA"/>
    <property type="match status" value="1"/>
</dbReference>
<dbReference type="Pfam" id="PF07724">
    <property type="entry name" value="AAA_2"/>
    <property type="match status" value="1"/>
</dbReference>
<dbReference type="Pfam" id="PF17871">
    <property type="entry name" value="AAA_lid_9"/>
    <property type="match status" value="1"/>
</dbReference>
<dbReference type="Pfam" id="PF02861">
    <property type="entry name" value="Clp_N"/>
    <property type="match status" value="2"/>
</dbReference>
<dbReference type="Pfam" id="PF10431">
    <property type="entry name" value="ClpB_D2-small"/>
    <property type="match status" value="1"/>
</dbReference>
<dbReference type="PRINTS" id="PR00300">
    <property type="entry name" value="CLPPROTEASEA"/>
</dbReference>
<dbReference type="SMART" id="SM00382">
    <property type="entry name" value="AAA"/>
    <property type="match status" value="2"/>
</dbReference>
<dbReference type="SMART" id="SM01086">
    <property type="entry name" value="ClpB_D2-small"/>
    <property type="match status" value="1"/>
</dbReference>
<dbReference type="SUPFAM" id="SSF81923">
    <property type="entry name" value="Double Clp-N motif"/>
    <property type="match status" value="1"/>
</dbReference>
<dbReference type="SUPFAM" id="SSF52540">
    <property type="entry name" value="P-loop containing nucleoside triphosphate hydrolases"/>
    <property type="match status" value="2"/>
</dbReference>
<dbReference type="PROSITE" id="PS51903">
    <property type="entry name" value="CLP_R"/>
    <property type="match status" value="1"/>
</dbReference>
<dbReference type="PROSITE" id="PS00870">
    <property type="entry name" value="CLPAB_1"/>
    <property type="match status" value="1"/>
</dbReference>
<dbReference type="PROSITE" id="PS00871">
    <property type="entry name" value="CLPAB_2"/>
    <property type="match status" value="1"/>
</dbReference>
<organism>
    <name type="scientific">Dichelobacter nodosus</name>
    <name type="common">Bacteroides nodosus</name>
    <dbReference type="NCBI Taxonomy" id="870"/>
    <lineage>
        <taxon>Bacteria</taxon>
        <taxon>Pseudomonadati</taxon>
        <taxon>Pseudomonadota</taxon>
        <taxon>Gammaproteobacteria</taxon>
        <taxon>Cardiobacteriales</taxon>
        <taxon>Cardiobacteriaceae</taxon>
        <taxon>Dichelobacter</taxon>
    </lineage>
</organism>
<sequence length="860" mass="96271">MEFMQMSKKFTARFQEALSAAQSLAVGKDHAYIEPLHIFSALLDQEGSSIIAIAQRAGGQIGAVRQAVMQALERLPRVKNPTGDVNISPESMRLLNLCDKYAQQNGDEYISSELFLRAVYDAKGDLEQLLRANGLEKAAVVAAIDAVRGGEAVTDEYAEDKRGALKKYTLDVTQRPLDGKIDPVIGRDEEIRRAMQILQRRSKNNPVLIGEPGVGKTAIVEGLAQRIADRAVPESLKGKRLLSLDLAALLAGTKYRGEFEERLKAVLDEITKADGQIILFIDEIHTMVGAGKSEGSLDAGNMLKPALARGDLHCIGATTLDEYRQYMEKDAALERRFQKVIVDEPSVEDTIAILRNLQERYEVHHGINITDPALVAAAQLSHRYISGRKLPDKAIDLMDEAAAQIRMELDSKPEVMDKIDRRLIQLQIERMALEKETDAASKRRLSDLEAEIAAQEKEYADLEEIWLAEKAGNAGAAEIKEQLDKLRVELEAAKRRGDFARASEIQYGLIPAKEKQLLENEQQTEQRPHRLMRNKVTAEEIAEIVSRWTGIPVAKMMEGEKERLLHLETVLNERVVGQKTAVEAVANAIRRNRAGLSDPKRPIGSFLFLGPTGVGKTELCRTLAQFLFDSEENMVRIDMSEFMEKHSVARLIGAPPGYVGYDQGGYLTEAVRRKPYSVVLFDEVEKAHSDVFNTLLQVLDEGRLTDGQGRTVDFRHTVIIMTSNLGSDMIQLLAEKSYEEMKSAVMEIVMAHFRPEFINRIDEAIVFHGLAKTHMYRIAQIQLERLRQRLQTRELLLSVEEDAINQLVELGYDPLFGARPLKRAIQNYIENPLAQALLAGQYLPQSTITIGFDGTNFTFH</sequence>
<proteinExistence type="inferred from homology"/>
<feature type="chain" id="PRO_0000191091" description="Chaperone protein ClpB">
    <location>
        <begin position="1"/>
        <end position="860"/>
    </location>
</feature>
<feature type="domain" description="Clp R" evidence="2">
    <location>
        <begin position="6"/>
        <end position="150"/>
    </location>
</feature>
<feature type="region of interest" description="Repeat 1" evidence="2">
    <location>
        <begin position="10"/>
        <end position="75"/>
    </location>
</feature>
<feature type="region of interest" description="Repeat 2" evidence="2">
    <location>
        <begin position="87"/>
        <end position="150"/>
    </location>
</feature>
<feature type="region of interest" description="NBD1" evidence="1">
    <location>
        <begin position="163"/>
        <end position="344"/>
    </location>
</feature>
<feature type="region of interest" description="Linker" evidence="1">
    <location>
        <begin position="345"/>
        <end position="550"/>
    </location>
</feature>
<feature type="region of interest" description="NBD2" evidence="1">
    <location>
        <begin position="560"/>
        <end position="769"/>
    </location>
</feature>
<feature type="region of interest" description="C-terminal" evidence="1">
    <location>
        <begin position="770"/>
        <end position="860"/>
    </location>
</feature>
<feature type="coiled-coil region" evidence="1">
    <location>
        <begin position="395"/>
        <end position="529"/>
    </location>
</feature>
<feature type="binding site" evidence="1">
    <location>
        <begin position="210"/>
        <end position="217"/>
    </location>
    <ligand>
        <name>ATP</name>
        <dbReference type="ChEBI" id="CHEBI:30616"/>
        <label>1</label>
    </ligand>
</feature>
<feature type="binding site" evidence="1">
    <location>
        <begin position="610"/>
        <end position="617"/>
    </location>
    <ligand>
        <name>ATP</name>
        <dbReference type="ChEBI" id="CHEBI:30616"/>
        <label>2</label>
    </ligand>
</feature>
<evidence type="ECO:0000250" key="1"/>
<evidence type="ECO:0000255" key="2">
    <source>
        <dbReference type="PROSITE-ProRule" id="PRU01251"/>
    </source>
</evidence>
<evidence type="ECO:0000305" key="3"/>
<protein>
    <recommendedName>
        <fullName>Chaperone protein ClpB</fullName>
    </recommendedName>
</protein>
<comment type="function">
    <text evidence="1">Part of a stress-induced multi-chaperone system, it is involved in the recovery of the cell from heat-induced damage, in cooperation with DnaK, DnaJ and GrpE. Acts before DnaK, in the processing of protein aggregates. Protein binding stimulates the ATPase activity; ATP hydrolysis unfolds the denatured protein aggregates, which probably helps expose new hydrophobic binding sites on the surface of ClpB-bound aggregates, contributing to the solubilization and refolding of denatured protein aggregates by DnaK (By similarity).</text>
</comment>
<comment type="subunit">
    <text evidence="1">Homohexamer. The oligomerization is ATP-dependent (By similarity).</text>
</comment>
<comment type="subcellular location">
    <subcellularLocation>
        <location evidence="3">Cytoplasm</location>
    </subcellularLocation>
</comment>
<comment type="domain">
    <text evidence="1">The Clp repeat (R) domain probably functions as a substrate-discriminating domain, recruiting aggregated proteins to the ClpB hexamer and/or stabilizing bound proteins. The NBD2 domain is responsible for oligomerization, whereas the NBD1 domain stabilizes the hexamer probably in an ATP-dependent manner. The movement of the coiled-coil domain is essential for ClpB ability to rescue proteins from an aggregated state, probably by pulling apart large aggregated proteins, which are bound between the coiled-coils motifs of adjacent ClpB subunits in the functional hexamer (By similarity).</text>
</comment>
<comment type="similarity">
    <text evidence="3">Belongs to the ClpA/ClpB family.</text>
</comment>
<keyword id="KW-0067">ATP-binding</keyword>
<keyword id="KW-0143">Chaperone</keyword>
<keyword id="KW-0175">Coiled coil</keyword>
<keyword id="KW-0963">Cytoplasm</keyword>
<keyword id="KW-0547">Nucleotide-binding</keyword>
<keyword id="KW-0677">Repeat</keyword>
<keyword id="KW-0346">Stress response</keyword>
<name>CLPB_DICNO</name>
<accession>P17422</accession>
<accession>Q6LDM0</accession>